<protein>
    <recommendedName>
        <fullName evidence="1">1-deoxy-D-xylulose 5-phosphate reductoisomerase</fullName>
        <shortName evidence="1">DXP reductoisomerase</shortName>
        <ecNumber evidence="1">1.1.1.267</ecNumber>
    </recommendedName>
    <alternativeName>
        <fullName evidence="1">1-deoxyxylulose-5-phosphate reductoisomerase</fullName>
    </alternativeName>
    <alternativeName>
        <fullName evidence="1">2-C-methyl-D-erythritol 4-phosphate synthase</fullName>
    </alternativeName>
</protein>
<name>DXR_PSEFS</name>
<evidence type="ECO:0000255" key="1">
    <source>
        <dbReference type="HAMAP-Rule" id="MF_00183"/>
    </source>
</evidence>
<reference key="1">
    <citation type="journal article" date="2009" name="Genome Biol.">
        <title>Genomic and genetic analyses of diversity and plant interactions of Pseudomonas fluorescens.</title>
        <authorList>
            <person name="Silby M.W."/>
            <person name="Cerdeno-Tarraga A.M."/>
            <person name="Vernikos G.S."/>
            <person name="Giddens S.R."/>
            <person name="Jackson R.W."/>
            <person name="Preston G.M."/>
            <person name="Zhang X.-X."/>
            <person name="Moon C.D."/>
            <person name="Gehrig S.M."/>
            <person name="Godfrey S.A.C."/>
            <person name="Knight C.G."/>
            <person name="Malone J.G."/>
            <person name="Robinson Z."/>
            <person name="Spiers A.J."/>
            <person name="Harris S."/>
            <person name="Challis G.L."/>
            <person name="Yaxley A.M."/>
            <person name="Harris D."/>
            <person name="Seeger K."/>
            <person name="Murphy L."/>
            <person name="Rutter S."/>
            <person name="Squares R."/>
            <person name="Quail M.A."/>
            <person name="Saunders E."/>
            <person name="Mavromatis K."/>
            <person name="Brettin T.S."/>
            <person name="Bentley S.D."/>
            <person name="Hothersall J."/>
            <person name="Stephens E."/>
            <person name="Thomas C.M."/>
            <person name="Parkhill J."/>
            <person name="Levy S.B."/>
            <person name="Rainey P.B."/>
            <person name="Thomson N.R."/>
        </authorList>
    </citation>
    <scope>NUCLEOTIDE SEQUENCE [LARGE SCALE GENOMIC DNA]</scope>
    <source>
        <strain>SBW25</strain>
    </source>
</reference>
<organism>
    <name type="scientific">Pseudomonas fluorescens (strain SBW25)</name>
    <dbReference type="NCBI Taxonomy" id="216595"/>
    <lineage>
        <taxon>Bacteria</taxon>
        <taxon>Pseudomonadati</taxon>
        <taxon>Pseudomonadota</taxon>
        <taxon>Gammaproteobacteria</taxon>
        <taxon>Pseudomonadales</taxon>
        <taxon>Pseudomonadaceae</taxon>
        <taxon>Pseudomonas</taxon>
    </lineage>
</organism>
<dbReference type="EC" id="1.1.1.267" evidence="1"/>
<dbReference type="EMBL" id="AM181176">
    <property type="protein sequence ID" value="CAY47533.1"/>
    <property type="molecule type" value="Genomic_DNA"/>
</dbReference>
<dbReference type="SMR" id="C3K601"/>
<dbReference type="STRING" id="294.SRM1_01135"/>
<dbReference type="PATRIC" id="fig|216595.4.peg.1507"/>
<dbReference type="eggNOG" id="COG0743">
    <property type="taxonomic scope" value="Bacteria"/>
</dbReference>
<dbReference type="HOGENOM" id="CLU_035714_4_0_6"/>
<dbReference type="OrthoDB" id="9806546at2"/>
<dbReference type="UniPathway" id="UPA00056">
    <property type="reaction ID" value="UER00092"/>
</dbReference>
<dbReference type="GO" id="GO:0030604">
    <property type="term" value="F:1-deoxy-D-xylulose-5-phosphate reductoisomerase activity"/>
    <property type="evidence" value="ECO:0007669"/>
    <property type="project" value="UniProtKB-UniRule"/>
</dbReference>
<dbReference type="GO" id="GO:0030145">
    <property type="term" value="F:manganese ion binding"/>
    <property type="evidence" value="ECO:0007669"/>
    <property type="project" value="TreeGrafter"/>
</dbReference>
<dbReference type="GO" id="GO:0070402">
    <property type="term" value="F:NADPH binding"/>
    <property type="evidence" value="ECO:0007669"/>
    <property type="project" value="InterPro"/>
</dbReference>
<dbReference type="GO" id="GO:0051484">
    <property type="term" value="P:isopentenyl diphosphate biosynthetic process, methylerythritol 4-phosphate pathway involved in terpenoid biosynthetic process"/>
    <property type="evidence" value="ECO:0007669"/>
    <property type="project" value="TreeGrafter"/>
</dbReference>
<dbReference type="FunFam" id="3.40.50.720:FF:000045">
    <property type="entry name" value="1-deoxy-D-xylulose 5-phosphate reductoisomerase"/>
    <property type="match status" value="1"/>
</dbReference>
<dbReference type="Gene3D" id="1.10.1740.10">
    <property type="match status" value="1"/>
</dbReference>
<dbReference type="Gene3D" id="3.40.50.720">
    <property type="entry name" value="NAD(P)-binding Rossmann-like Domain"/>
    <property type="match status" value="1"/>
</dbReference>
<dbReference type="HAMAP" id="MF_00183">
    <property type="entry name" value="DXP_reductoisom"/>
    <property type="match status" value="1"/>
</dbReference>
<dbReference type="InterPro" id="IPR003821">
    <property type="entry name" value="DXP_reductoisomerase"/>
</dbReference>
<dbReference type="InterPro" id="IPR013644">
    <property type="entry name" value="DXP_reductoisomerase_C"/>
</dbReference>
<dbReference type="InterPro" id="IPR013512">
    <property type="entry name" value="DXP_reductoisomerase_N"/>
</dbReference>
<dbReference type="InterPro" id="IPR026877">
    <property type="entry name" value="DXPR_C"/>
</dbReference>
<dbReference type="InterPro" id="IPR036169">
    <property type="entry name" value="DXPR_C_sf"/>
</dbReference>
<dbReference type="InterPro" id="IPR036291">
    <property type="entry name" value="NAD(P)-bd_dom_sf"/>
</dbReference>
<dbReference type="NCBIfam" id="TIGR00243">
    <property type="entry name" value="Dxr"/>
    <property type="match status" value="1"/>
</dbReference>
<dbReference type="NCBIfam" id="NF003938">
    <property type="entry name" value="PRK05447.1-1"/>
    <property type="match status" value="1"/>
</dbReference>
<dbReference type="NCBIfam" id="NF009114">
    <property type="entry name" value="PRK12464.1"/>
    <property type="match status" value="1"/>
</dbReference>
<dbReference type="PANTHER" id="PTHR30525">
    <property type="entry name" value="1-DEOXY-D-XYLULOSE 5-PHOSPHATE REDUCTOISOMERASE"/>
    <property type="match status" value="1"/>
</dbReference>
<dbReference type="PANTHER" id="PTHR30525:SF0">
    <property type="entry name" value="1-DEOXY-D-XYLULOSE 5-PHOSPHATE REDUCTOISOMERASE, CHLOROPLASTIC"/>
    <property type="match status" value="1"/>
</dbReference>
<dbReference type="Pfam" id="PF08436">
    <property type="entry name" value="DXP_redisom_C"/>
    <property type="match status" value="1"/>
</dbReference>
<dbReference type="Pfam" id="PF02670">
    <property type="entry name" value="DXP_reductoisom"/>
    <property type="match status" value="1"/>
</dbReference>
<dbReference type="Pfam" id="PF13288">
    <property type="entry name" value="DXPR_C"/>
    <property type="match status" value="1"/>
</dbReference>
<dbReference type="PIRSF" id="PIRSF006205">
    <property type="entry name" value="Dxp_reductismrs"/>
    <property type="match status" value="1"/>
</dbReference>
<dbReference type="SUPFAM" id="SSF69055">
    <property type="entry name" value="1-deoxy-D-xylulose-5-phosphate reductoisomerase, C-terminal domain"/>
    <property type="match status" value="1"/>
</dbReference>
<dbReference type="SUPFAM" id="SSF55347">
    <property type="entry name" value="Glyceraldehyde-3-phosphate dehydrogenase-like, C-terminal domain"/>
    <property type="match status" value="1"/>
</dbReference>
<dbReference type="SUPFAM" id="SSF51735">
    <property type="entry name" value="NAD(P)-binding Rossmann-fold domains"/>
    <property type="match status" value="1"/>
</dbReference>
<accession>C3K601</accession>
<gene>
    <name evidence="1" type="primary">dxr</name>
    <name type="ordered locus">PFLU_1276</name>
</gene>
<keyword id="KW-0414">Isoprene biosynthesis</keyword>
<keyword id="KW-0464">Manganese</keyword>
<keyword id="KW-0479">Metal-binding</keyword>
<keyword id="KW-0521">NADP</keyword>
<keyword id="KW-0560">Oxidoreductase</keyword>
<sequence length="396" mass="42368">MSRLQQVTVLGATGSVGLSSLDVIARHPDRYQVFALTGFTRMSELLALCVRHAPRFAVVPEAAAARTLQDDLRAAGLATQVLVGEEGLCQVSADAEVDTVVAAIVGAAGLRPTLAAVDAGKKILLANKEALVMSGALFMQAVRKSGAVLLPLDSEHNAIFQCMPGDYARGLSQVGVRRILLTASGGPFRKTPLAELEQVSPDQACAHPNWSMGRKISVDSASMMNKGLELIEACWLFDARPDQVEVVIHPQSVIHSLVDYVDGSVLAQLGNPDMRTPIANALAWPERIDSGVAPLDLFAVARLDFEAPDEQRFPCLRLARQAAEAGNSAPAMLNAANEVAVAAFLERRIRFPQIASIIEDVLALEPVVTVSDLGAVFEADTKARALAEQWLNRNVR</sequence>
<comment type="function">
    <text evidence="1">Catalyzes the NADPH-dependent rearrangement and reduction of 1-deoxy-D-xylulose-5-phosphate (DXP) to 2-C-methyl-D-erythritol 4-phosphate (MEP).</text>
</comment>
<comment type="catalytic activity">
    <reaction evidence="1">
        <text>2-C-methyl-D-erythritol 4-phosphate + NADP(+) = 1-deoxy-D-xylulose 5-phosphate + NADPH + H(+)</text>
        <dbReference type="Rhea" id="RHEA:13717"/>
        <dbReference type="ChEBI" id="CHEBI:15378"/>
        <dbReference type="ChEBI" id="CHEBI:57783"/>
        <dbReference type="ChEBI" id="CHEBI:57792"/>
        <dbReference type="ChEBI" id="CHEBI:58262"/>
        <dbReference type="ChEBI" id="CHEBI:58349"/>
        <dbReference type="EC" id="1.1.1.267"/>
    </reaction>
    <physiologicalReaction direction="right-to-left" evidence="1">
        <dbReference type="Rhea" id="RHEA:13719"/>
    </physiologicalReaction>
</comment>
<comment type="cofactor">
    <cofactor evidence="1">
        <name>Mg(2+)</name>
        <dbReference type="ChEBI" id="CHEBI:18420"/>
    </cofactor>
    <cofactor evidence="1">
        <name>Mn(2+)</name>
        <dbReference type="ChEBI" id="CHEBI:29035"/>
    </cofactor>
</comment>
<comment type="pathway">
    <text evidence="1">Isoprenoid biosynthesis; isopentenyl diphosphate biosynthesis via DXP pathway; isopentenyl diphosphate from 1-deoxy-D-xylulose 5-phosphate: step 1/6.</text>
</comment>
<comment type="similarity">
    <text evidence="1">Belongs to the DXR family.</text>
</comment>
<feature type="chain" id="PRO_1000203892" description="1-deoxy-D-xylulose 5-phosphate reductoisomerase">
    <location>
        <begin position="1"/>
        <end position="396"/>
    </location>
</feature>
<feature type="binding site" evidence="1">
    <location>
        <position position="13"/>
    </location>
    <ligand>
        <name>NADPH</name>
        <dbReference type="ChEBI" id="CHEBI:57783"/>
    </ligand>
</feature>
<feature type="binding site" evidence="1">
    <location>
        <position position="14"/>
    </location>
    <ligand>
        <name>NADPH</name>
        <dbReference type="ChEBI" id="CHEBI:57783"/>
    </ligand>
</feature>
<feature type="binding site" evidence="1">
    <location>
        <position position="15"/>
    </location>
    <ligand>
        <name>NADPH</name>
        <dbReference type="ChEBI" id="CHEBI:57783"/>
    </ligand>
</feature>
<feature type="binding site" evidence="1">
    <location>
        <position position="16"/>
    </location>
    <ligand>
        <name>NADPH</name>
        <dbReference type="ChEBI" id="CHEBI:57783"/>
    </ligand>
</feature>
<feature type="binding site" evidence="1">
    <location>
        <position position="127"/>
    </location>
    <ligand>
        <name>NADPH</name>
        <dbReference type="ChEBI" id="CHEBI:57783"/>
    </ligand>
</feature>
<feature type="binding site" evidence="1">
    <location>
        <position position="128"/>
    </location>
    <ligand>
        <name>1-deoxy-D-xylulose 5-phosphate</name>
        <dbReference type="ChEBI" id="CHEBI:57792"/>
    </ligand>
</feature>
<feature type="binding site" evidence="1">
    <location>
        <position position="129"/>
    </location>
    <ligand>
        <name>NADPH</name>
        <dbReference type="ChEBI" id="CHEBI:57783"/>
    </ligand>
</feature>
<feature type="binding site" evidence="1">
    <location>
        <position position="153"/>
    </location>
    <ligand>
        <name>Mn(2+)</name>
        <dbReference type="ChEBI" id="CHEBI:29035"/>
    </ligand>
</feature>
<feature type="binding site" evidence="1">
    <location>
        <position position="154"/>
    </location>
    <ligand>
        <name>1-deoxy-D-xylulose 5-phosphate</name>
        <dbReference type="ChEBI" id="CHEBI:57792"/>
    </ligand>
</feature>
<feature type="binding site" evidence="1">
    <location>
        <position position="155"/>
    </location>
    <ligand>
        <name>1-deoxy-D-xylulose 5-phosphate</name>
        <dbReference type="ChEBI" id="CHEBI:57792"/>
    </ligand>
</feature>
<feature type="binding site" evidence="1">
    <location>
        <position position="155"/>
    </location>
    <ligand>
        <name>Mn(2+)</name>
        <dbReference type="ChEBI" id="CHEBI:29035"/>
    </ligand>
</feature>
<feature type="binding site" evidence="1">
    <location>
        <position position="184"/>
    </location>
    <ligand>
        <name>1-deoxy-D-xylulose 5-phosphate</name>
        <dbReference type="ChEBI" id="CHEBI:57792"/>
    </ligand>
</feature>
<feature type="binding site" evidence="1">
    <location>
        <position position="207"/>
    </location>
    <ligand>
        <name>1-deoxy-D-xylulose 5-phosphate</name>
        <dbReference type="ChEBI" id="CHEBI:57792"/>
    </ligand>
</feature>
<feature type="binding site" evidence="1">
    <location>
        <position position="213"/>
    </location>
    <ligand>
        <name>NADPH</name>
        <dbReference type="ChEBI" id="CHEBI:57783"/>
    </ligand>
</feature>
<feature type="binding site" evidence="1">
    <location>
        <position position="220"/>
    </location>
    <ligand>
        <name>1-deoxy-D-xylulose 5-phosphate</name>
        <dbReference type="ChEBI" id="CHEBI:57792"/>
    </ligand>
</feature>
<feature type="binding site" evidence="1">
    <location>
        <position position="225"/>
    </location>
    <ligand>
        <name>1-deoxy-D-xylulose 5-phosphate</name>
        <dbReference type="ChEBI" id="CHEBI:57792"/>
    </ligand>
</feature>
<feature type="binding site" evidence="1">
    <location>
        <position position="226"/>
    </location>
    <ligand>
        <name>1-deoxy-D-xylulose 5-phosphate</name>
        <dbReference type="ChEBI" id="CHEBI:57792"/>
    </ligand>
</feature>
<feature type="binding site" evidence="1">
    <location>
        <position position="229"/>
    </location>
    <ligand>
        <name>1-deoxy-D-xylulose 5-phosphate</name>
        <dbReference type="ChEBI" id="CHEBI:57792"/>
    </ligand>
</feature>
<feature type="binding site" evidence="1">
    <location>
        <position position="229"/>
    </location>
    <ligand>
        <name>Mn(2+)</name>
        <dbReference type="ChEBI" id="CHEBI:29035"/>
    </ligand>
</feature>
<proteinExistence type="inferred from homology"/>